<protein>
    <recommendedName>
        <fullName evidence="1">Glycine dehydrogenase (decarboxylating)</fullName>
        <ecNumber evidence="1">1.4.4.2</ecNumber>
    </recommendedName>
    <alternativeName>
        <fullName evidence="1">Glycine cleavage system P-protein</fullName>
    </alternativeName>
    <alternativeName>
        <fullName evidence="1">Glycine decarboxylase</fullName>
    </alternativeName>
    <alternativeName>
        <fullName evidence="1">Glycine dehydrogenase (aminomethyl-transferring)</fullName>
    </alternativeName>
</protein>
<name>GCSP_PSEU2</name>
<organism>
    <name type="scientific">Pseudomonas syringae pv. syringae (strain B728a)</name>
    <dbReference type="NCBI Taxonomy" id="205918"/>
    <lineage>
        <taxon>Bacteria</taxon>
        <taxon>Pseudomonadati</taxon>
        <taxon>Pseudomonadota</taxon>
        <taxon>Gammaproteobacteria</taxon>
        <taxon>Pseudomonadales</taxon>
        <taxon>Pseudomonadaceae</taxon>
        <taxon>Pseudomonas</taxon>
        <taxon>Pseudomonas syringae</taxon>
    </lineage>
</organism>
<reference key="1">
    <citation type="journal article" date="2005" name="Proc. Natl. Acad. Sci. U.S.A.">
        <title>Comparison of the complete genome sequences of Pseudomonas syringae pv. syringae B728a and pv. tomato DC3000.</title>
        <authorList>
            <person name="Feil H."/>
            <person name="Feil W.S."/>
            <person name="Chain P."/>
            <person name="Larimer F."/>
            <person name="Dibartolo G."/>
            <person name="Copeland A."/>
            <person name="Lykidis A."/>
            <person name="Trong S."/>
            <person name="Nolan M."/>
            <person name="Goltsman E."/>
            <person name="Thiel J."/>
            <person name="Malfatti S."/>
            <person name="Loper J.E."/>
            <person name="Lapidus A."/>
            <person name="Detter J.C."/>
            <person name="Land M."/>
            <person name="Richardson P.M."/>
            <person name="Kyrpides N.C."/>
            <person name="Ivanova N."/>
            <person name="Lindow S.E."/>
        </authorList>
    </citation>
    <scope>NUCLEOTIDE SEQUENCE [LARGE SCALE GENOMIC DNA]</scope>
    <source>
        <strain>B728a</strain>
    </source>
</reference>
<proteinExistence type="inferred from homology"/>
<gene>
    <name evidence="1" type="primary">gcvP</name>
    <name type="ordered locus">Psyr_1096</name>
</gene>
<dbReference type="EC" id="1.4.4.2" evidence="1"/>
<dbReference type="EMBL" id="CP000075">
    <property type="protein sequence ID" value="AAY36150.1"/>
    <property type="molecule type" value="Genomic_DNA"/>
</dbReference>
<dbReference type="RefSeq" id="WP_011266822.1">
    <property type="nucleotide sequence ID" value="NC_007005.1"/>
</dbReference>
<dbReference type="RefSeq" id="YP_234188.1">
    <property type="nucleotide sequence ID" value="NC_007005.1"/>
</dbReference>
<dbReference type="SMR" id="Q4ZXH2"/>
<dbReference type="STRING" id="205918.Psyr_1096"/>
<dbReference type="KEGG" id="psb:Psyr_1096"/>
<dbReference type="PATRIC" id="fig|205918.7.peg.1127"/>
<dbReference type="eggNOG" id="COG0403">
    <property type="taxonomic scope" value="Bacteria"/>
</dbReference>
<dbReference type="eggNOG" id="COG1003">
    <property type="taxonomic scope" value="Bacteria"/>
</dbReference>
<dbReference type="HOGENOM" id="CLU_004620_3_2_6"/>
<dbReference type="OrthoDB" id="9801272at2"/>
<dbReference type="Proteomes" id="UP000000426">
    <property type="component" value="Chromosome"/>
</dbReference>
<dbReference type="GO" id="GO:0005829">
    <property type="term" value="C:cytosol"/>
    <property type="evidence" value="ECO:0007669"/>
    <property type="project" value="TreeGrafter"/>
</dbReference>
<dbReference type="GO" id="GO:0005960">
    <property type="term" value="C:glycine cleavage complex"/>
    <property type="evidence" value="ECO:0007669"/>
    <property type="project" value="TreeGrafter"/>
</dbReference>
<dbReference type="GO" id="GO:0016594">
    <property type="term" value="F:glycine binding"/>
    <property type="evidence" value="ECO:0007669"/>
    <property type="project" value="TreeGrafter"/>
</dbReference>
<dbReference type="GO" id="GO:0004375">
    <property type="term" value="F:glycine dehydrogenase (decarboxylating) activity"/>
    <property type="evidence" value="ECO:0007669"/>
    <property type="project" value="UniProtKB-EC"/>
</dbReference>
<dbReference type="GO" id="GO:0030170">
    <property type="term" value="F:pyridoxal phosphate binding"/>
    <property type="evidence" value="ECO:0007669"/>
    <property type="project" value="TreeGrafter"/>
</dbReference>
<dbReference type="GO" id="GO:0019464">
    <property type="term" value="P:glycine decarboxylation via glycine cleavage system"/>
    <property type="evidence" value="ECO:0007669"/>
    <property type="project" value="UniProtKB-UniRule"/>
</dbReference>
<dbReference type="CDD" id="cd00613">
    <property type="entry name" value="GDC-P"/>
    <property type="match status" value="1"/>
</dbReference>
<dbReference type="FunFam" id="3.40.640.10:FF:000005">
    <property type="entry name" value="Glycine dehydrogenase (decarboxylating), mitochondrial"/>
    <property type="match status" value="1"/>
</dbReference>
<dbReference type="FunFam" id="3.90.1150.10:FF:000007">
    <property type="entry name" value="Glycine dehydrogenase (decarboxylating), mitochondrial"/>
    <property type="match status" value="1"/>
</dbReference>
<dbReference type="FunFam" id="3.40.640.10:FF:000007">
    <property type="entry name" value="glycine dehydrogenase (Decarboxylating), mitochondrial"/>
    <property type="match status" value="1"/>
</dbReference>
<dbReference type="Gene3D" id="3.90.1150.10">
    <property type="entry name" value="Aspartate Aminotransferase, domain 1"/>
    <property type="match status" value="1"/>
</dbReference>
<dbReference type="Gene3D" id="3.40.640.10">
    <property type="entry name" value="Type I PLP-dependent aspartate aminotransferase-like (Major domain)"/>
    <property type="match status" value="2"/>
</dbReference>
<dbReference type="HAMAP" id="MF_00711">
    <property type="entry name" value="GcvP"/>
    <property type="match status" value="1"/>
</dbReference>
<dbReference type="InterPro" id="IPR003437">
    <property type="entry name" value="GcvP"/>
</dbReference>
<dbReference type="InterPro" id="IPR049316">
    <property type="entry name" value="GDC-P_C"/>
</dbReference>
<dbReference type="InterPro" id="IPR049315">
    <property type="entry name" value="GDC-P_N"/>
</dbReference>
<dbReference type="InterPro" id="IPR020581">
    <property type="entry name" value="GDC_P"/>
</dbReference>
<dbReference type="InterPro" id="IPR015424">
    <property type="entry name" value="PyrdxlP-dep_Trfase"/>
</dbReference>
<dbReference type="InterPro" id="IPR015421">
    <property type="entry name" value="PyrdxlP-dep_Trfase_major"/>
</dbReference>
<dbReference type="InterPro" id="IPR015422">
    <property type="entry name" value="PyrdxlP-dep_Trfase_small"/>
</dbReference>
<dbReference type="NCBIfam" id="TIGR00461">
    <property type="entry name" value="gcvP"/>
    <property type="match status" value="1"/>
</dbReference>
<dbReference type="NCBIfam" id="NF003346">
    <property type="entry name" value="PRK04366.1"/>
    <property type="match status" value="1"/>
</dbReference>
<dbReference type="PANTHER" id="PTHR11773:SF1">
    <property type="entry name" value="GLYCINE DEHYDROGENASE (DECARBOXYLATING), MITOCHONDRIAL"/>
    <property type="match status" value="1"/>
</dbReference>
<dbReference type="PANTHER" id="PTHR11773">
    <property type="entry name" value="GLYCINE DEHYDROGENASE, DECARBOXYLATING"/>
    <property type="match status" value="1"/>
</dbReference>
<dbReference type="Pfam" id="PF21478">
    <property type="entry name" value="GcvP2_C"/>
    <property type="match status" value="1"/>
</dbReference>
<dbReference type="Pfam" id="PF02347">
    <property type="entry name" value="GDC-P"/>
    <property type="match status" value="2"/>
</dbReference>
<dbReference type="SUPFAM" id="SSF53383">
    <property type="entry name" value="PLP-dependent transferases"/>
    <property type="match status" value="2"/>
</dbReference>
<comment type="function">
    <text evidence="1">The glycine cleavage system catalyzes the degradation of glycine. The P protein binds the alpha-amino group of glycine through its pyridoxal phosphate cofactor; CO(2) is released and the remaining methylamine moiety is then transferred to the lipoamide cofactor of the H protein.</text>
</comment>
<comment type="catalytic activity">
    <reaction evidence="1">
        <text>N(6)-[(R)-lipoyl]-L-lysyl-[glycine-cleavage complex H protein] + glycine + H(+) = N(6)-[(R)-S(8)-aminomethyldihydrolipoyl]-L-lysyl-[glycine-cleavage complex H protein] + CO2</text>
        <dbReference type="Rhea" id="RHEA:24304"/>
        <dbReference type="Rhea" id="RHEA-COMP:10494"/>
        <dbReference type="Rhea" id="RHEA-COMP:10495"/>
        <dbReference type="ChEBI" id="CHEBI:15378"/>
        <dbReference type="ChEBI" id="CHEBI:16526"/>
        <dbReference type="ChEBI" id="CHEBI:57305"/>
        <dbReference type="ChEBI" id="CHEBI:83099"/>
        <dbReference type="ChEBI" id="CHEBI:83143"/>
        <dbReference type="EC" id="1.4.4.2"/>
    </reaction>
</comment>
<comment type="cofactor">
    <cofactor evidence="1">
        <name>pyridoxal 5'-phosphate</name>
        <dbReference type="ChEBI" id="CHEBI:597326"/>
    </cofactor>
</comment>
<comment type="subunit">
    <text evidence="1">The glycine cleavage system is composed of four proteins: P, T, L and H.</text>
</comment>
<comment type="similarity">
    <text evidence="1">Belongs to the GcvP family.</text>
</comment>
<keyword id="KW-0560">Oxidoreductase</keyword>
<keyword id="KW-0663">Pyridoxal phosphate</keyword>
<evidence type="ECO:0000255" key="1">
    <source>
        <dbReference type="HAMAP-Rule" id="MF_00711"/>
    </source>
</evidence>
<feature type="chain" id="PRO_0000227121" description="Glycine dehydrogenase (decarboxylating)">
    <location>
        <begin position="1"/>
        <end position="954"/>
    </location>
</feature>
<feature type="modified residue" description="N6-(pyridoxal phosphate)lysine" evidence="1">
    <location>
        <position position="706"/>
    </location>
</feature>
<accession>Q4ZXH2</accession>
<sequence>MTDRIELTTANEFIARHIGPRAADELAMLQTLGFDSIEALSESVIPESIKGTSVLNLPAGQSEADALASIKAIASKNQLFKTYIGQGYYNTHTPAPILRNLLENPAWYTAYTPYQPEISQGRLESLLNFQTLISDLTGLPIANASLLDEATAAAEAMTFCKRLSKNKASQQFFASSHCHPQTLDVLRTRAEPLGITVVVADEHELGDVSDYFGALLQYPASNGDVFDYRELVERFHAANALVAVAADLLALTLLTPPGEFGADVAIGSAQRFGVPLGFGGPHAAYFSTRDAFKRDMPGRLVGVSVDRHGKQALRLAMQTREQHIRREKATSNICTAQVLLANIASMYAVYHGPRGLTQIANRVHQLTAILAEGLSTLGLNAEQAFFFDSLTLHTGDRTAALHAAARARHINLREIDDQRLGLSLDETTSQSAVETLWAIFANDGQSLPDFAALADSVQSRLPAGLLRQSAILSHPVFNRYHSETELMRYLRKLADKDLALDRTMIPLGSCTMKLNAASEMIPVTWAEFGNLHPFAPAEQSAGYQQLTDELEAMLCAATGYDAISLQPNAGSQGEYAGLLAIRAYHQSRGDEHRDICLIPSSAHGTNPATANMAGMRVVVTACDARGNVDIEDLRAKAVQHRDQLAAIMITYPSTHGVFEEGIREICGIVHDNGGQVYIDGANMNAMVGLCAPGKFGGDVSHLNLHKTFCIPHGGGGPGVGPIGVKSHLAPFMPGHARMERKEGAVCAAPFGSASILPITWMYIRMMGGEGLKRASQLAILNANYISRRLEEHYPVLYTGSNGLVAHECILDLRPIKDSSGISVDDVAKRLIDFGFHAPTMSFPVAGTLMIEPTESESREELDRFCDAMIKIREEIRAVENGTLDKDDNPLKNAPHTAAEIVGQWSHPYSREQAVYPVDSLIENKYWPPVGRVDNVFGDRNLVCACPSIENYQEA</sequence>